<organism>
    <name type="scientific">Acaryochloris marina (strain MBIC 11017)</name>
    <dbReference type="NCBI Taxonomy" id="329726"/>
    <lineage>
        <taxon>Bacteria</taxon>
        <taxon>Bacillati</taxon>
        <taxon>Cyanobacteriota</taxon>
        <taxon>Cyanophyceae</taxon>
        <taxon>Acaryochloridales</taxon>
        <taxon>Acaryochloridaceae</taxon>
        <taxon>Acaryochloris</taxon>
    </lineage>
</organism>
<gene>
    <name evidence="1" type="primary">thiC</name>
    <name type="ordered locus">AM1_3002</name>
</gene>
<sequence>MRHQWVANRRGQSNVSQMHYARQGQITEEMDYVAKRENLPADLIREEVARGRMIIPANVNHVNLEPMAIGIASKCKVNANIGASPNSSNIEEELDKLRLAVKYGADTVMDLSTGGGNLDEIRTAIINESSVPIGTVPIYQALESVHGNIENLTADDFLHIIDKHAQQGVDYQTIHAGILIEHLPLVRDRITGIVSRGGGILARWMLHHHKQNPLYTRFNDVIEIFKKHDVSFSLGDSLRPGCTHDASDDAQLAELKTLGQLTRRAWEHDVQVMVEGPGHVPMDQIEFNVRKQMEECSEAPFYVLGPLVTDIAPGYDHITSAIGAAMAGWYGTAMLCYVTPKEHLGLPDAEDVRNGLIAYKIAAHAADIARHRPGARDRDDQLSEARYNFDWNRQFELSLDPERAREYHDETLPADIYKTAEFCSMCGPKFCPMQTKVDADALTELEKFLAKDQVGSAR</sequence>
<protein>
    <recommendedName>
        <fullName evidence="1">Phosphomethylpyrimidine synthase</fullName>
        <ecNumber evidence="1">4.1.99.17</ecNumber>
    </recommendedName>
    <alternativeName>
        <fullName evidence="1">Hydroxymethylpyrimidine phosphate synthase</fullName>
        <shortName evidence="1">HMP-P synthase</shortName>
        <shortName evidence="1">HMP-phosphate synthase</shortName>
        <shortName evidence="1">HMPP synthase</shortName>
    </alternativeName>
    <alternativeName>
        <fullName evidence="1">Thiamine biosynthesis protein ThiC</fullName>
    </alternativeName>
</protein>
<keyword id="KW-0004">4Fe-4S</keyword>
<keyword id="KW-0408">Iron</keyword>
<keyword id="KW-0411">Iron-sulfur</keyword>
<keyword id="KW-0456">Lyase</keyword>
<keyword id="KW-0479">Metal-binding</keyword>
<keyword id="KW-1185">Reference proteome</keyword>
<keyword id="KW-0949">S-adenosyl-L-methionine</keyword>
<keyword id="KW-0784">Thiamine biosynthesis</keyword>
<keyword id="KW-0862">Zinc</keyword>
<feature type="chain" id="PRO_1000075431" description="Phosphomethylpyrimidine synthase">
    <location>
        <begin position="1"/>
        <end position="458"/>
    </location>
</feature>
<feature type="binding site" evidence="1">
    <location>
        <position position="80"/>
    </location>
    <ligand>
        <name>substrate</name>
    </ligand>
</feature>
<feature type="binding site" evidence="1">
    <location>
        <position position="109"/>
    </location>
    <ligand>
        <name>substrate</name>
    </ligand>
</feature>
<feature type="binding site" evidence="1">
    <location>
        <position position="139"/>
    </location>
    <ligand>
        <name>substrate</name>
    </ligand>
</feature>
<feature type="binding site" evidence="1">
    <location>
        <position position="175"/>
    </location>
    <ligand>
        <name>substrate</name>
    </ligand>
</feature>
<feature type="binding site" evidence="1">
    <location>
        <begin position="195"/>
        <end position="197"/>
    </location>
    <ligand>
        <name>substrate</name>
    </ligand>
</feature>
<feature type="binding site" evidence="1">
    <location>
        <begin position="236"/>
        <end position="239"/>
    </location>
    <ligand>
        <name>substrate</name>
    </ligand>
</feature>
<feature type="binding site" evidence="1">
    <location>
        <position position="275"/>
    </location>
    <ligand>
        <name>substrate</name>
    </ligand>
</feature>
<feature type="binding site" evidence="1">
    <location>
        <position position="279"/>
    </location>
    <ligand>
        <name>Zn(2+)</name>
        <dbReference type="ChEBI" id="CHEBI:29105"/>
    </ligand>
</feature>
<feature type="binding site" evidence="1">
    <location>
        <position position="302"/>
    </location>
    <ligand>
        <name>substrate</name>
    </ligand>
</feature>
<feature type="binding site" evidence="1">
    <location>
        <position position="343"/>
    </location>
    <ligand>
        <name>Zn(2+)</name>
        <dbReference type="ChEBI" id="CHEBI:29105"/>
    </ligand>
</feature>
<feature type="binding site" evidence="1">
    <location>
        <position position="423"/>
    </location>
    <ligand>
        <name>[4Fe-4S] cluster</name>
        <dbReference type="ChEBI" id="CHEBI:49883"/>
        <note>4Fe-4S-S-AdoMet</note>
    </ligand>
</feature>
<feature type="binding site" evidence="1">
    <location>
        <position position="426"/>
    </location>
    <ligand>
        <name>[4Fe-4S] cluster</name>
        <dbReference type="ChEBI" id="CHEBI:49883"/>
        <note>4Fe-4S-S-AdoMet</note>
    </ligand>
</feature>
<feature type="binding site" evidence="1">
    <location>
        <position position="431"/>
    </location>
    <ligand>
        <name>[4Fe-4S] cluster</name>
        <dbReference type="ChEBI" id="CHEBI:49883"/>
        <note>4Fe-4S-S-AdoMet</note>
    </ligand>
</feature>
<evidence type="ECO:0000255" key="1">
    <source>
        <dbReference type="HAMAP-Rule" id="MF_00089"/>
    </source>
</evidence>
<reference key="1">
    <citation type="journal article" date="2008" name="Proc. Natl. Acad. Sci. U.S.A.">
        <title>Niche adaptation and genome expansion in the chlorophyll d-producing cyanobacterium Acaryochloris marina.</title>
        <authorList>
            <person name="Swingley W.D."/>
            <person name="Chen M."/>
            <person name="Cheung P.C."/>
            <person name="Conrad A.L."/>
            <person name="Dejesa L.C."/>
            <person name="Hao J."/>
            <person name="Honchak B.M."/>
            <person name="Karbach L.E."/>
            <person name="Kurdoglu A."/>
            <person name="Lahiri S."/>
            <person name="Mastrian S.D."/>
            <person name="Miyashita H."/>
            <person name="Page L."/>
            <person name="Ramakrishna P."/>
            <person name="Satoh S."/>
            <person name="Sattley W.M."/>
            <person name="Shimada Y."/>
            <person name="Taylor H.L."/>
            <person name="Tomo T."/>
            <person name="Tsuchiya T."/>
            <person name="Wang Z.T."/>
            <person name="Raymond J."/>
            <person name="Mimuro M."/>
            <person name="Blankenship R.E."/>
            <person name="Touchman J.W."/>
        </authorList>
    </citation>
    <scope>NUCLEOTIDE SEQUENCE [LARGE SCALE GENOMIC DNA]</scope>
    <source>
        <strain>MBIC 11017</strain>
    </source>
</reference>
<comment type="function">
    <text evidence="1">Catalyzes the synthesis of the hydroxymethylpyrimidine phosphate (HMP-P) moiety of thiamine from aminoimidazole ribotide (AIR) in a radical S-adenosyl-L-methionine (SAM)-dependent reaction.</text>
</comment>
<comment type="catalytic activity">
    <reaction evidence="1">
        <text>5-amino-1-(5-phospho-beta-D-ribosyl)imidazole + S-adenosyl-L-methionine = 4-amino-2-methyl-5-(phosphooxymethyl)pyrimidine + CO + 5'-deoxyadenosine + formate + L-methionine + 3 H(+)</text>
        <dbReference type="Rhea" id="RHEA:24840"/>
        <dbReference type="ChEBI" id="CHEBI:15378"/>
        <dbReference type="ChEBI" id="CHEBI:15740"/>
        <dbReference type="ChEBI" id="CHEBI:17245"/>
        <dbReference type="ChEBI" id="CHEBI:17319"/>
        <dbReference type="ChEBI" id="CHEBI:57844"/>
        <dbReference type="ChEBI" id="CHEBI:58354"/>
        <dbReference type="ChEBI" id="CHEBI:59789"/>
        <dbReference type="ChEBI" id="CHEBI:137981"/>
        <dbReference type="EC" id="4.1.99.17"/>
    </reaction>
</comment>
<comment type="cofactor">
    <cofactor evidence="1">
        <name>[4Fe-4S] cluster</name>
        <dbReference type="ChEBI" id="CHEBI:49883"/>
    </cofactor>
    <text evidence="1">Binds 1 [4Fe-4S] cluster per subunit. The cluster is coordinated with 3 cysteines and an exchangeable S-adenosyl-L-methionine.</text>
</comment>
<comment type="pathway">
    <text evidence="1">Cofactor biosynthesis; thiamine diphosphate biosynthesis.</text>
</comment>
<comment type="similarity">
    <text evidence="1">Belongs to the ThiC family.</text>
</comment>
<name>THIC_ACAM1</name>
<proteinExistence type="inferred from homology"/>
<dbReference type="EC" id="4.1.99.17" evidence="1"/>
<dbReference type="EMBL" id="CP000828">
    <property type="protein sequence ID" value="ABW27998.1"/>
    <property type="molecule type" value="Genomic_DNA"/>
</dbReference>
<dbReference type="RefSeq" id="WP_012163431.1">
    <property type="nucleotide sequence ID" value="NC_009925.1"/>
</dbReference>
<dbReference type="SMR" id="B0CCG9"/>
<dbReference type="STRING" id="329726.AM1_3002"/>
<dbReference type="KEGG" id="amr:AM1_3002"/>
<dbReference type="eggNOG" id="COG0422">
    <property type="taxonomic scope" value="Bacteria"/>
</dbReference>
<dbReference type="HOGENOM" id="CLU_013181_2_1_3"/>
<dbReference type="OrthoDB" id="9805897at2"/>
<dbReference type="UniPathway" id="UPA00060"/>
<dbReference type="Proteomes" id="UP000000268">
    <property type="component" value="Chromosome"/>
</dbReference>
<dbReference type="GO" id="GO:0005829">
    <property type="term" value="C:cytosol"/>
    <property type="evidence" value="ECO:0007669"/>
    <property type="project" value="TreeGrafter"/>
</dbReference>
<dbReference type="GO" id="GO:0051539">
    <property type="term" value="F:4 iron, 4 sulfur cluster binding"/>
    <property type="evidence" value="ECO:0007669"/>
    <property type="project" value="UniProtKB-KW"/>
</dbReference>
<dbReference type="GO" id="GO:0016830">
    <property type="term" value="F:carbon-carbon lyase activity"/>
    <property type="evidence" value="ECO:0007669"/>
    <property type="project" value="InterPro"/>
</dbReference>
<dbReference type="GO" id="GO:0008270">
    <property type="term" value="F:zinc ion binding"/>
    <property type="evidence" value="ECO:0007669"/>
    <property type="project" value="UniProtKB-UniRule"/>
</dbReference>
<dbReference type="GO" id="GO:0009228">
    <property type="term" value="P:thiamine biosynthetic process"/>
    <property type="evidence" value="ECO:0007669"/>
    <property type="project" value="UniProtKB-KW"/>
</dbReference>
<dbReference type="GO" id="GO:0009229">
    <property type="term" value="P:thiamine diphosphate biosynthetic process"/>
    <property type="evidence" value="ECO:0007669"/>
    <property type="project" value="UniProtKB-UniRule"/>
</dbReference>
<dbReference type="FunFam" id="3.20.20.540:FF:000001">
    <property type="entry name" value="Phosphomethylpyrimidine synthase"/>
    <property type="match status" value="1"/>
</dbReference>
<dbReference type="Gene3D" id="6.10.250.620">
    <property type="match status" value="1"/>
</dbReference>
<dbReference type="Gene3D" id="3.20.20.540">
    <property type="entry name" value="Radical SAM ThiC family, central domain"/>
    <property type="match status" value="1"/>
</dbReference>
<dbReference type="HAMAP" id="MF_00089">
    <property type="entry name" value="ThiC"/>
    <property type="match status" value="1"/>
</dbReference>
<dbReference type="InterPro" id="IPR037509">
    <property type="entry name" value="ThiC"/>
</dbReference>
<dbReference type="InterPro" id="IPR038521">
    <property type="entry name" value="ThiC/Bza_core_dom"/>
</dbReference>
<dbReference type="InterPro" id="IPR002817">
    <property type="entry name" value="ThiC/BzaA/B"/>
</dbReference>
<dbReference type="NCBIfam" id="NF006763">
    <property type="entry name" value="PRK09284.1"/>
    <property type="match status" value="1"/>
</dbReference>
<dbReference type="NCBIfam" id="NF009895">
    <property type="entry name" value="PRK13352.1"/>
    <property type="match status" value="1"/>
</dbReference>
<dbReference type="NCBIfam" id="TIGR00190">
    <property type="entry name" value="thiC"/>
    <property type="match status" value="1"/>
</dbReference>
<dbReference type="PANTHER" id="PTHR30557:SF1">
    <property type="entry name" value="PHOSPHOMETHYLPYRIMIDINE SYNTHASE, CHLOROPLASTIC"/>
    <property type="match status" value="1"/>
</dbReference>
<dbReference type="PANTHER" id="PTHR30557">
    <property type="entry name" value="THIAMINE BIOSYNTHESIS PROTEIN THIC"/>
    <property type="match status" value="1"/>
</dbReference>
<dbReference type="Pfam" id="PF01964">
    <property type="entry name" value="ThiC_Rad_SAM"/>
    <property type="match status" value="1"/>
</dbReference>
<dbReference type="SFLD" id="SFLDF00407">
    <property type="entry name" value="phosphomethylpyrimidine_syntha"/>
    <property type="match status" value="1"/>
</dbReference>
<dbReference type="SFLD" id="SFLDG01114">
    <property type="entry name" value="phosphomethylpyrimidine_syntha"/>
    <property type="match status" value="1"/>
</dbReference>
<dbReference type="SFLD" id="SFLDS00113">
    <property type="entry name" value="Radical_SAM_Phosphomethylpyrim"/>
    <property type="match status" value="1"/>
</dbReference>
<accession>B0CCG9</accession>